<gene>
    <name evidence="1" type="primary">rpsC</name>
    <name type="ordered locus">Glov_1352</name>
</gene>
<feature type="chain" id="PRO_1000140975" description="Small ribosomal subunit protein uS3">
    <location>
        <begin position="1"/>
        <end position="210"/>
    </location>
</feature>
<feature type="domain" description="KH type-2" evidence="1">
    <location>
        <begin position="38"/>
        <end position="106"/>
    </location>
</feature>
<accession>B3E7U1</accession>
<keyword id="KW-1185">Reference proteome</keyword>
<keyword id="KW-0687">Ribonucleoprotein</keyword>
<keyword id="KW-0689">Ribosomal protein</keyword>
<keyword id="KW-0694">RNA-binding</keyword>
<keyword id="KW-0699">rRNA-binding</keyword>
<proteinExistence type="inferred from homology"/>
<sequence>MGQKVNPIGFRLGVIKTWDSKWYAEADFAKNLHEDLKIRQFLKKRLYSAGISKIEIERAANKTKINIHAARPGLIIGKKGAEVELLKKDLAAITSKEVFININEVRKPELDAQLVAENVALQLERRIAFRRAMKKSVTSSLKFGAKGIRITCSGRLGGAEMSRTEWYREGRVPLHTLRADIDYGFAEAKTTYGIIGVKVLIFKGEVLPGQ</sequence>
<dbReference type="EMBL" id="CP001089">
    <property type="protein sequence ID" value="ACD95073.1"/>
    <property type="molecule type" value="Genomic_DNA"/>
</dbReference>
<dbReference type="RefSeq" id="WP_012469418.1">
    <property type="nucleotide sequence ID" value="NC_010814.1"/>
</dbReference>
<dbReference type="SMR" id="B3E7U1"/>
<dbReference type="STRING" id="398767.Glov_1352"/>
<dbReference type="KEGG" id="glo:Glov_1352"/>
<dbReference type="eggNOG" id="COG0092">
    <property type="taxonomic scope" value="Bacteria"/>
</dbReference>
<dbReference type="HOGENOM" id="CLU_058591_0_2_7"/>
<dbReference type="OrthoDB" id="9806396at2"/>
<dbReference type="Proteomes" id="UP000002420">
    <property type="component" value="Chromosome"/>
</dbReference>
<dbReference type="GO" id="GO:0022627">
    <property type="term" value="C:cytosolic small ribosomal subunit"/>
    <property type="evidence" value="ECO:0007669"/>
    <property type="project" value="TreeGrafter"/>
</dbReference>
<dbReference type="GO" id="GO:0003729">
    <property type="term" value="F:mRNA binding"/>
    <property type="evidence" value="ECO:0007669"/>
    <property type="project" value="UniProtKB-UniRule"/>
</dbReference>
<dbReference type="GO" id="GO:0019843">
    <property type="term" value="F:rRNA binding"/>
    <property type="evidence" value="ECO:0007669"/>
    <property type="project" value="UniProtKB-UniRule"/>
</dbReference>
<dbReference type="GO" id="GO:0003735">
    <property type="term" value="F:structural constituent of ribosome"/>
    <property type="evidence" value="ECO:0007669"/>
    <property type="project" value="InterPro"/>
</dbReference>
<dbReference type="GO" id="GO:0006412">
    <property type="term" value="P:translation"/>
    <property type="evidence" value="ECO:0007669"/>
    <property type="project" value="UniProtKB-UniRule"/>
</dbReference>
<dbReference type="CDD" id="cd02412">
    <property type="entry name" value="KH-II_30S_S3"/>
    <property type="match status" value="1"/>
</dbReference>
<dbReference type="FunFam" id="3.30.1140.32:FF:000009">
    <property type="entry name" value="30S ribosomal protein S3"/>
    <property type="match status" value="1"/>
</dbReference>
<dbReference type="FunFam" id="3.30.300.20:FF:000001">
    <property type="entry name" value="30S ribosomal protein S3"/>
    <property type="match status" value="1"/>
</dbReference>
<dbReference type="Gene3D" id="3.30.300.20">
    <property type="match status" value="1"/>
</dbReference>
<dbReference type="Gene3D" id="3.30.1140.32">
    <property type="entry name" value="Ribosomal protein S3, C-terminal domain"/>
    <property type="match status" value="1"/>
</dbReference>
<dbReference type="HAMAP" id="MF_01309_B">
    <property type="entry name" value="Ribosomal_uS3_B"/>
    <property type="match status" value="1"/>
</dbReference>
<dbReference type="InterPro" id="IPR004087">
    <property type="entry name" value="KH_dom"/>
</dbReference>
<dbReference type="InterPro" id="IPR015946">
    <property type="entry name" value="KH_dom-like_a/b"/>
</dbReference>
<dbReference type="InterPro" id="IPR004044">
    <property type="entry name" value="KH_dom_type_2"/>
</dbReference>
<dbReference type="InterPro" id="IPR009019">
    <property type="entry name" value="KH_sf_prok-type"/>
</dbReference>
<dbReference type="InterPro" id="IPR036419">
    <property type="entry name" value="Ribosomal_S3_C_sf"/>
</dbReference>
<dbReference type="InterPro" id="IPR005704">
    <property type="entry name" value="Ribosomal_uS3_bac-typ"/>
</dbReference>
<dbReference type="InterPro" id="IPR001351">
    <property type="entry name" value="Ribosomal_uS3_C"/>
</dbReference>
<dbReference type="InterPro" id="IPR018280">
    <property type="entry name" value="Ribosomal_uS3_CS"/>
</dbReference>
<dbReference type="NCBIfam" id="TIGR01009">
    <property type="entry name" value="rpsC_bact"/>
    <property type="match status" value="1"/>
</dbReference>
<dbReference type="PANTHER" id="PTHR11760">
    <property type="entry name" value="30S/40S RIBOSOMAL PROTEIN S3"/>
    <property type="match status" value="1"/>
</dbReference>
<dbReference type="PANTHER" id="PTHR11760:SF19">
    <property type="entry name" value="SMALL RIBOSOMAL SUBUNIT PROTEIN US3C"/>
    <property type="match status" value="1"/>
</dbReference>
<dbReference type="Pfam" id="PF07650">
    <property type="entry name" value="KH_2"/>
    <property type="match status" value="1"/>
</dbReference>
<dbReference type="Pfam" id="PF00189">
    <property type="entry name" value="Ribosomal_S3_C"/>
    <property type="match status" value="1"/>
</dbReference>
<dbReference type="SMART" id="SM00322">
    <property type="entry name" value="KH"/>
    <property type="match status" value="1"/>
</dbReference>
<dbReference type="SUPFAM" id="SSF54814">
    <property type="entry name" value="Prokaryotic type KH domain (KH-domain type II)"/>
    <property type="match status" value="1"/>
</dbReference>
<dbReference type="SUPFAM" id="SSF54821">
    <property type="entry name" value="Ribosomal protein S3 C-terminal domain"/>
    <property type="match status" value="1"/>
</dbReference>
<dbReference type="PROSITE" id="PS50823">
    <property type="entry name" value="KH_TYPE_2"/>
    <property type="match status" value="1"/>
</dbReference>
<dbReference type="PROSITE" id="PS00548">
    <property type="entry name" value="RIBOSOMAL_S3"/>
    <property type="match status" value="1"/>
</dbReference>
<protein>
    <recommendedName>
        <fullName evidence="1">Small ribosomal subunit protein uS3</fullName>
    </recommendedName>
    <alternativeName>
        <fullName evidence="2">30S ribosomal protein S3</fullName>
    </alternativeName>
</protein>
<organism>
    <name type="scientific">Trichlorobacter lovleyi (strain ATCC BAA-1151 / DSM 17278 / SZ)</name>
    <name type="common">Geobacter lovleyi</name>
    <dbReference type="NCBI Taxonomy" id="398767"/>
    <lineage>
        <taxon>Bacteria</taxon>
        <taxon>Pseudomonadati</taxon>
        <taxon>Thermodesulfobacteriota</taxon>
        <taxon>Desulfuromonadia</taxon>
        <taxon>Geobacterales</taxon>
        <taxon>Geobacteraceae</taxon>
        <taxon>Trichlorobacter</taxon>
    </lineage>
</organism>
<reference key="1">
    <citation type="submission" date="2008-05" db="EMBL/GenBank/DDBJ databases">
        <title>Complete sequence of chromosome of Geobacter lovleyi SZ.</title>
        <authorList>
            <consortium name="US DOE Joint Genome Institute"/>
            <person name="Lucas S."/>
            <person name="Copeland A."/>
            <person name="Lapidus A."/>
            <person name="Glavina del Rio T."/>
            <person name="Dalin E."/>
            <person name="Tice H."/>
            <person name="Bruce D."/>
            <person name="Goodwin L."/>
            <person name="Pitluck S."/>
            <person name="Chertkov O."/>
            <person name="Meincke L."/>
            <person name="Brettin T."/>
            <person name="Detter J.C."/>
            <person name="Han C."/>
            <person name="Tapia R."/>
            <person name="Kuske C.R."/>
            <person name="Schmutz J."/>
            <person name="Larimer F."/>
            <person name="Land M."/>
            <person name="Hauser L."/>
            <person name="Kyrpides N."/>
            <person name="Mikhailova N."/>
            <person name="Sung Y."/>
            <person name="Fletcher K.E."/>
            <person name="Ritalahti K.M."/>
            <person name="Loeffler F.E."/>
            <person name="Richardson P."/>
        </authorList>
    </citation>
    <scope>NUCLEOTIDE SEQUENCE [LARGE SCALE GENOMIC DNA]</scope>
    <source>
        <strain>ATCC BAA-1151 / DSM 17278 / SZ</strain>
    </source>
</reference>
<evidence type="ECO:0000255" key="1">
    <source>
        <dbReference type="HAMAP-Rule" id="MF_01309"/>
    </source>
</evidence>
<evidence type="ECO:0000305" key="2"/>
<name>RS3_TRIL1</name>
<comment type="function">
    <text evidence="1">Binds the lower part of the 30S subunit head. Binds mRNA in the 70S ribosome, positioning it for translation.</text>
</comment>
<comment type="subunit">
    <text evidence="1">Part of the 30S ribosomal subunit. Forms a tight complex with proteins S10 and S14.</text>
</comment>
<comment type="similarity">
    <text evidence="1">Belongs to the universal ribosomal protein uS3 family.</text>
</comment>